<feature type="chain" id="PRO_0000247888" description="tRNA-guanine(15) transglycosylase">
    <location>
        <begin position="1"/>
        <end position="632"/>
    </location>
</feature>
<feature type="domain" description="PUA" evidence="1">
    <location>
        <begin position="553"/>
        <end position="628"/>
    </location>
</feature>
<feature type="active site" description="Nucleophile" evidence="1">
    <location>
        <position position="86"/>
    </location>
</feature>
<feature type="binding site" evidence="1">
    <location>
        <position position="121"/>
    </location>
    <ligand>
        <name>substrate</name>
    </ligand>
</feature>
<feature type="binding site" evidence="1">
    <location>
        <position position="186"/>
    </location>
    <ligand>
        <name>substrate</name>
    </ligand>
</feature>
<dbReference type="EC" id="2.4.2.48" evidence="1"/>
<dbReference type="EMBL" id="BA000011">
    <property type="protein sequence ID" value="BAB60666.1"/>
    <property type="molecule type" value="Genomic_DNA"/>
</dbReference>
<dbReference type="RefSeq" id="WP_010917753.1">
    <property type="nucleotide sequence ID" value="NC_002689.2"/>
</dbReference>
<dbReference type="SMR" id="Q977Z3"/>
<dbReference type="STRING" id="273116.gene:9382339"/>
<dbReference type="PaxDb" id="273116-14325763"/>
<dbReference type="GeneID" id="1442213"/>
<dbReference type="KEGG" id="tvo:TVG1580555"/>
<dbReference type="eggNOG" id="arCOG00989">
    <property type="taxonomic scope" value="Archaea"/>
</dbReference>
<dbReference type="eggNOG" id="arCOG00991">
    <property type="taxonomic scope" value="Archaea"/>
</dbReference>
<dbReference type="HOGENOM" id="CLU_030083_0_0_2"/>
<dbReference type="OrthoDB" id="6871at2157"/>
<dbReference type="PhylomeDB" id="Q977Z3"/>
<dbReference type="UniPathway" id="UPA00393"/>
<dbReference type="Proteomes" id="UP000001017">
    <property type="component" value="Chromosome"/>
</dbReference>
<dbReference type="GO" id="GO:0005737">
    <property type="term" value="C:cytoplasm"/>
    <property type="evidence" value="ECO:0007669"/>
    <property type="project" value="TreeGrafter"/>
</dbReference>
<dbReference type="GO" id="GO:0016763">
    <property type="term" value="F:pentosyltransferase activity"/>
    <property type="evidence" value="ECO:0007669"/>
    <property type="project" value="UniProtKB-UniRule"/>
</dbReference>
<dbReference type="GO" id="GO:0003723">
    <property type="term" value="F:RNA binding"/>
    <property type="evidence" value="ECO:0007669"/>
    <property type="project" value="InterPro"/>
</dbReference>
<dbReference type="GO" id="GO:0008270">
    <property type="term" value="F:zinc ion binding"/>
    <property type="evidence" value="ECO:0007669"/>
    <property type="project" value="UniProtKB-UniRule"/>
</dbReference>
<dbReference type="GO" id="GO:0002099">
    <property type="term" value="P:tRNA wobble guanine modification"/>
    <property type="evidence" value="ECO:0007669"/>
    <property type="project" value="TreeGrafter"/>
</dbReference>
<dbReference type="CDD" id="cd21149">
    <property type="entry name" value="PUA_archaeosine_TGT"/>
    <property type="match status" value="1"/>
</dbReference>
<dbReference type="Gene3D" id="3.10.450.90">
    <property type="entry name" value="ArcTGT, C2 domain"/>
    <property type="match status" value="1"/>
</dbReference>
<dbReference type="Gene3D" id="2.30.130.10">
    <property type="entry name" value="PUA domain"/>
    <property type="match status" value="1"/>
</dbReference>
<dbReference type="Gene3D" id="3.20.20.105">
    <property type="entry name" value="Queuine tRNA-ribosyltransferase-like"/>
    <property type="match status" value="1"/>
</dbReference>
<dbReference type="HAMAP" id="MF_01634">
    <property type="entry name" value="TgtA_arch"/>
    <property type="match status" value="1"/>
</dbReference>
<dbReference type="InterPro" id="IPR050076">
    <property type="entry name" value="ArchSynthase1/Queuine_TRR"/>
</dbReference>
<dbReference type="InterPro" id="IPR002478">
    <property type="entry name" value="PUA"/>
</dbReference>
<dbReference type="InterPro" id="IPR015947">
    <property type="entry name" value="PUA-like_sf"/>
</dbReference>
<dbReference type="InterPro" id="IPR036974">
    <property type="entry name" value="PUA_sf"/>
</dbReference>
<dbReference type="InterPro" id="IPR036511">
    <property type="entry name" value="TGT-like_sf"/>
</dbReference>
<dbReference type="InterPro" id="IPR029402">
    <property type="entry name" value="TGT_C2"/>
</dbReference>
<dbReference type="InterPro" id="IPR038250">
    <property type="entry name" value="TGT_C2_sf"/>
</dbReference>
<dbReference type="InterPro" id="IPR004804">
    <property type="entry name" value="TgtA"/>
</dbReference>
<dbReference type="InterPro" id="IPR002616">
    <property type="entry name" value="tRNA_ribo_trans-like"/>
</dbReference>
<dbReference type="InterPro" id="IPR004521">
    <property type="entry name" value="Uncharacterised_CHP00451"/>
</dbReference>
<dbReference type="NCBIfam" id="TIGR00432">
    <property type="entry name" value="arcsn_tRNA_tgt"/>
    <property type="match status" value="1"/>
</dbReference>
<dbReference type="NCBIfam" id="TIGR00449">
    <property type="entry name" value="tgt_general"/>
    <property type="match status" value="1"/>
</dbReference>
<dbReference type="NCBIfam" id="TIGR00451">
    <property type="entry name" value="unchar_dom_2"/>
    <property type="match status" value="1"/>
</dbReference>
<dbReference type="PANTHER" id="PTHR46499">
    <property type="entry name" value="QUEUINE TRNA-RIBOSYLTRANSFERASE"/>
    <property type="match status" value="1"/>
</dbReference>
<dbReference type="PANTHER" id="PTHR46499:SF1">
    <property type="entry name" value="QUEUINE TRNA-RIBOSYLTRANSFERASE"/>
    <property type="match status" value="1"/>
</dbReference>
<dbReference type="Pfam" id="PF01472">
    <property type="entry name" value="PUA"/>
    <property type="match status" value="1"/>
</dbReference>
<dbReference type="Pfam" id="PF01702">
    <property type="entry name" value="TGT"/>
    <property type="match status" value="1"/>
</dbReference>
<dbReference type="Pfam" id="PF14810">
    <property type="entry name" value="TGT_C2"/>
    <property type="match status" value="1"/>
</dbReference>
<dbReference type="SMART" id="SM00359">
    <property type="entry name" value="PUA"/>
    <property type="match status" value="1"/>
</dbReference>
<dbReference type="SUPFAM" id="SSF88802">
    <property type="entry name" value="Pre-PUA domain"/>
    <property type="match status" value="1"/>
</dbReference>
<dbReference type="SUPFAM" id="SSF88697">
    <property type="entry name" value="PUA domain-like"/>
    <property type="match status" value="1"/>
</dbReference>
<dbReference type="SUPFAM" id="SSF51713">
    <property type="entry name" value="tRNA-guanine transglycosylase"/>
    <property type="match status" value="1"/>
</dbReference>
<dbReference type="PROSITE" id="PS50890">
    <property type="entry name" value="PUA"/>
    <property type="match status" value="1"/>
</dbReference>
<comment type="function">
    <text evidence="1">Exchanges the guanine residue with 7-cyano-7-deazaguanine (preQ0) at position 15 in the dihydrouridine loop (D-loop) of archaeal tRNAs.</text>
</comment>
<comment type="catalytic activity">
    <reaction evidence="1">
        <text>guanosine(15) in tRNA + 7-cyano-7-deazaguanine = 7-cyano-7-carbaguanosine(15) in tRNA + guanine</text>
        <dbReference type="Rhea" id="RHEA:43164"/>
        <dbReference type="Rhea" id="RHEA-COMP:10371"/>
        <dbReference type="Rhea" id="RHEA-COMP:10372"/>
        <dbReference type="ChEBI" id="CHEBI:16235"/>
        <dbReference type="ChEBI" id="CHEBI:45075"/>
        <dbReference type="ChEBI" id="CHEBI:74269"/>
        <dbReference type="ChEBI" id="CHEBI:82850"/>
        <dbReference type="EC" id="2.4.2.48"/>
    </reaction>
</comment>
<comment type="cofactor">
    <cofactor evidence="1">
        <name>Zn(2+)</name>
        <dbReference type="ChEBI" id="CHEBI:29105"/>
    </cofactor>
    <text evidence="1">Binds 1 zinc ion per subunit.</text>
</comment>
<comment type="pathway">
    <text evidence="1">tRNA modification; archaeosine-tRNA biosynthesis.</text>
</comment>
<comment type="similarity">
    <text evidence="1">Belongs to the archaeosine tRNA-ribosyltransferase family.</text>
</comment>
<name>ATGT_THEVO</name>
<reference key="1">
    <citation type="journal article" date="2000" name="Proc. Natl. Acad. Sci. U.S.A.">
        <title>Archaeal adaptation to higher temperatures revealed by genomic sequence of Thermoplasma volcanium.</title>
        <authorList>
            <person name="Kawashima T."/>
            <person name="Amano N."/>
            <person name="Koike H."/>
            <person name="Makino S."/>
            <person name="Higuchi S."/>
            <person name="Kawashima-Ohya Y."/>
            <person name="Watanabe K."/>
            <person name="Yamazaki M."/>
            <person name="Kanehori K."/>
            <person name="Kawamoto T."/>
            <person name="Nunoshiba T."/>
            <person name="Yamamoto Y."/>
            <person name="Aramaki H."/>
            <person name="Makino K."/>
            <person name="Suzuki M."/>
        </authorList>
    </citation>
    <scope>NUCLEOTIDE SEQUENCE [LARGE SCALE GENOMIC DNA]</scope>
    <source>
        <strain>ATCC 51530 / DSM 4299 / JCM 9571 / NBRC 15438 / GSS1</strain>
    </source>
</reference>
<accession>Q977Z3</accession>
<evidence type="ECO:0000255" key="1">
    <source>
        <dbReference type="HAMAP-Rule" id="MF_01634"/>
    </source>
</evidence>
<proteinExistence type="inferred from homology"/>
<keyword id="KW-0328">Glycosyltransferase</keyword>
<keyword id="KW-0479">Metal-binding</keyword>
<keyword id="KW-0808">Transferase</keyword>
<keyword id="KW-0819">tRNA processing</keyword>
<keyword id="KW-0862">Zinc</keyword>
<organism>
    <name type="scientific">Thermoplasma volcanium (strain ATCC 51530 / DSM 4299 / JCM 9571 / NBRC 15438 / GSS1)</name>
    <dbReference type="NCBI Taxonomy" id="273116"/>
    <lineage>
        <taxon>Archaea</taxon>
        <taxon>Methanobacteriati</taxon>
        <taxon>Thermoplasmatota</taxon>
        <taxon>Thermoplasmata</taxon>
        <taxon>Thermoplasmatales</taxon>
        <taxon>Thermoplasmataceae</taxon>
        <taxon>Thermoplasma</taxon>
    </lineage>
</organism>
<protein>
    <recommendedName>
        <fullName evidence="1">tRNA-guanine(15) transglycosylase</fullName>
        <ecNumber evidence="1">2.4.2.48</ecNumber>
    </recommendedName>
    <alternativeName>
        <fullName evidence="1">7-cyano-7-deazaguanine tRNA-ribosyltransferase</fullName>
    </alternativeName>
    <alternativeName>
        <fullName evidence="1">Archaeal tRNA-guanine transglycosylase</fullName>
    </alternativeName>
</protein>
<gene>
    <name evidence="1" type="primary">tgtA</name>
    <name type="ordered locus">TV1524</name>
    <name type="ORF">TVG1580555</name>
</gene>
<sequence>MEIRERDGLARIARFDTPHGTIETPTVLPVINPNIMDITPEEMKKYGVHGVITNSYIILRNDRLREEAEKYGVHSLIGYDGPVMTDSGTFQSYVYGSVEFNNRQVVEFQKTIGSDILTILDIFTTPSSSRQEVENAITETYRRMLEVNDAGGMIAGPIQGGIYPDLRKRSAELMNSTNASYLPIGGVVPLLESYEYDKLVDIILNSKLNVSFGKPIHLFGGGHPMFFAFAVYLGVDLFDSASYVKYAKDDRLIYPDGTRDLARIIEIPEWSPLFDKYTVKELKELPKEQRSVELSRHNLKAIFMEISEIRERIYEESMDQYLAQKAKSHPSLLKAYVKVMQYSKMLEKYQDLFKKAAYFFYDSFSTKNTYVARLEKFTSKYLTSKKKETYVFSRKDWLPGYTNLNFVRDVYERTECNALIPWSGIMVPAELENTYPIEQTVSSGLEPDPDVSAISESISPFDIRVYKGESVDSDKIRSFDLEKIRTIADYQFGYGIGKDFFKDDVRIFKSKTGRIRGVFDKGNKLIATLRNDGFFTLTFHGATLLYNVSKSPNLRVFVKNESAEYNAKGYSVFFKFILDADPDIIAKNETLVVNENGELVAVGKATVSGKELREYSDGIAVKIHEGRDQSAK</sequence>